<keyword id="KW-0963">Cytoplasm</keyword>
<keyword id="KW-0342">GTP-binding</keyword>
<keyword id="KW-0436">Ligase</keyword>
<keyword id="KW-0460">Magnesium</keyword>
<keyword id="KW-0479">Metal-binding</keyword>
<keyword id="KW-0547">Nucleotide-binding</keyword>
<keyword id="KW-0658">Purine biosynthesis</keyword>
<evidence type="ECO:0000255" key="1">
    <source>
        <dbReference type="HAMAP-Rule" id="MF_00011"/>
    </source>
</evidence>
<protein>
    <recommendedName>
        <fullName evidence="1">Adenylosuccinate synthetase</fullName>
        <shortName evidence="1">AMPSase</shortName>
        <shortName evidence="1">AdSS</shortName>
        <ecNumber evidence="1">6.3.4.4</ecNumber>
    </recommendedName>
    <alternativeName>
        <fullName evidence="1">IMP--aspartate ligase</fullName>
    </alternativeName>
</protein>
<organism>
    <name type="scientific">Xanthomonas oryzae pv. oryzae (strain MAFF 311018)</name>
    <dbReference type="NCBI Taxonomy" id="342109"/>
    <lineage>
        <taxon>Bacteria</taxon>
        <taxon>Pseudomonadati</taxon>
        <taxon>Pseudomonadota</taxon>
        <taxon>Gammaproteobacteria</taxon>
        <taxon>Lysobacterales</taxon>
        <taxon>Lysobacteraceae</taxon>
        <taxon>Xanthomonas</taxon>
    </lineage>
</organism>
<sequence length="430" mass="46178">MGQSVVVLGAQWGDEGKGKIVDLLTEEIGAVVRFQGGHNAGHTLVINGKKTVLHLIPSGILRDDALCLIGNGVVISPAALIKEVSELEDAGVEVRSRLKISPAAPLIMPYHIALDQAREKAAGGKAIGTTGRGIGPAYEDKVARRGIRIADLHYPPQLEELLRTALDYHNFVLTKYLGVEAVDFQKTYDEALAFGDYVQPMKSDVAGILHDLRKQGKRVLFEGAQGALLDIDHGTYPYVTSSNTTVGGALAGTGVGADAIDYVLGIAKAYATRVGGGPFPTELDDAVGQGIRDRGAEYGASTGRPRRCGWMDIVALKRAVAINGISGLCITKLDVLDGMEKLKVCIAYEYRGKRTEYAPLDAQGWEECTPVYLEFPGWTENTHGITEWDKLPVAARAYLRALEELAGCPISIVSTGPDRDHTMVLQDPFA</sequence>
<comment type="function">
    <text evidence="1">Plays an important role in the de novo pathway of purine nucleotide biosynthesis. Catalyzes the first committed step in the biosynthesis of AMP from IMP.</text>
</comment>
<comment type="catalytic activity">
    <reaction evidence="1">
        <text>IMP + L-aspartate + GTP = N(6)-(1,2-dicarboxyethyl)-AMP + GDP + phosphate + 2 H(+)</text>
        <dbReference type="Rhea" id="RHEA:15753"/>
        <dbReference type="ChEBI" id="CHEBI:15378"/>
        <dbReference type="ChEBI" id="CHEBI:29991"/>
        <dbReference type="ChEBI" id="CHEBI:37565"/>
        <dbReference type="ChEBI" id="CHEBI:43474"/>
        <dbReference type="ChEBI" id="CHEBI:57567"/>
        <dbReference type="ChEBI" id="CHEBI:58053"/>
        <dbReference type="ChEBI" id="CHEBI:58189"/>
        <dbReference type="EC" id="6.3.4.4"/>
    </reaction>
</comment>
<comment type="cofactor">
    <cofactor evidence="1">
        <name>Mg(2+)</name>
        <dbReference type="ChEBI" id="CHEBI:18420"/>
    </cofactor>
    <text evidence="1">Binds 1 Mg(2+) ion per subunit.</text>
</comment>
<comment type="pathway">
    <text evidence="1">Purine metabolism; AMP biosynthesis via de novo pathway; AMP from IMP: step 1/2.</text>
</comment>
<comment type="subunit">
    <text evidence="1">Homodimer.</text>
</comment>
<comment type="subcellular location">
    <subcellularLocation>
        <location evidence="1">Cytoplasm</location>
    </subcellularLocation>
</comment>
<comment type="similarity">
    <text evidence="1">Belongs to the adenylosuccinate synthetase family.</text>
</comment>
<dbReference type="EC" id="6.3.4.4" evidence="1"/>
<dbReference type="EMBL" id="AP008229">
    <property type="protein sequence ID" value="BAE67595.1"/>
    <property type="molecule type" value="Genomic_DNA"/>
</dbReference>
<dbReference type="RefSeq" id="WP_011407681.1">
    <property type="nucleotide sequence ID" value="NC_007705.1"/>
</dbReference>
<dbReference type="SMR" id="Q2P782"/>
<dbReference type="KEGG" id="xom:XOO0840"/>
<dbReference type="HOGENOM" id="CLU_029848_0_0_6"/>
<dbReference type="UniPathway" id="UPA00075">
    <property type="reaction ID" value="UER00335"/>
</dbReference>
<dbReference type="GO" id="GO:0005737">
    <property type="term" value="C:cytoplasm"/>
    <property type="evidence" value="ECO:0007669"/>
    <property type="project" value="UniProtKB-SubCell"/>
</dbReference>
<dbReference type="GO" id="GO:0004019">
    <property type="term" value="F:adenylosuccinate synthase activity"/>
    <property type="evidence" value="ECO:0007669"/>
    <property type="project" value="UniProtKB-UniRule"/>
</dbReference>
<dbReference type="GO" id="GO:0005525">
    <property type="term" value="F:GTP binding"/>
    <property type="evidence" value="ECO:0007669"/>
    <property type="project" value="UniProtKB-UniRule"/>
</dbReference>
<dbReference type="GO" id="GO:0000287">
    <property type="term" value="F:magnesium ion binding"/>
    <property type="evidence" value="ECO:0007669"/>
    <property type="project" value="UniProtKB-UniRule"/>
</dbReference>
<dbReference type="GO" id="GO:0044208">
    <property type="term" value="P:'de novo' AMP biosynthetic process"/>
    <property type="evidence" value="ECO:0007669"/>
    <property type="project" value="UniProtKB-UniRule"/>
</dbReference>
<dbReference type="GO" id="GO:0046040">
    <property type="term" value="P:IMP metabolic process"/>
    <property type="evidence" value="ECO:0007669"/>
    <property type="project" value="TreeGrafter"/>
</dbReference>
<dbReference type="CDD" id="cd03108">
    <property type="entry name" value="AdSS"/>
    <property type="match status" value="1"/>
</dbReference>
<dbReference type="FunFam" id="1.10.300.10:FF:000001">
    <property type="entry name" value="Adenylosuccinate synthetase"/>
    <property type="match status" value="1"/>
</dbReference>
<dbReference type="FunFam" id="3.90.170.10:FF:000001">
    <property type="entry name" value="Adenylosuccinate synthetase"/>
    <property type="match status" value="1"/>
</dbReference>
<dbReference type="Gene3D" id="3.40.440.10">
    <property type="entry name" value="Adenylosuccinate Synthetase, subunit A, domain 1"/>
    <property type="match status" value="1"/>
</dbReference>
<dbReference type="Gene3D" id="1.10.300.10">
    <property type="entry name" value="Adenylosuccinate Synthetase, subunit A, domain 2"/>
    <property type="match status" value="1"/>
</dbReference>
<dbReference type="Gene3D" id="3.90.170.10">
    <property type="entry name" value="Adenylosuccinate Synthetase, subunit A, domain 3"/>
    <property type="match status" value="1"/>
</dbReference>
<dbReference type="HAMAP" id="MF_00011">
    <property type="entry name" value="Adenylosucc_synth"/>
    <property type="match status" value="1"/>
</dbReference>
<dbReference type="InterPro" id="IPR018220">
    <property type="entry name" value="Adenylosuccin_syn_GTP-bd"/>
</dbReference>
<dbReference type="InterPro" id="IPR033128">
    <property type="entry name" value="Adenylosuccin_syn_Lys_AS"/>
</dbReference>
<dbReference type="InterPro" id="IPR042109">
    <property type="entry name" value="Adenylosuccinate_synth_dom1"/>
</dbReference>
<dbReference type="InterPro" id="IPR042110">
    <property type="entry name" value="Adenylosuccinate_synth_dom2"/>
</dbReference>
<dbReference type="InterPro" id="IPR042111">
    <property type="entry name" value="Adenylosuccinate_synth_dom3"/>
</dbReference>
<dbReference type="InterPro" id="IPR001114">
    <property type="entry name" value="Adenylosuccinate_synthetase"/>
</dbReference>
<dbReference type="InterPro" id="IPR027417">
    <property type="entry name" value="P-loop_NTPase"/>
</dbReference>
<dbReference type="NCBIfam" id="NF002223">
    <property type="entry name" value="PRK01117.1"/>
    <property type="match status" value="1"/>
</dbReference>
<dbReference type="NCBIfam" id="TIGR00184">
    <property type="entry name" value="purA"/>
    <property type="match status" value="1"/>
</dbReference>
<dbReference type="PANTHER" id="PTHR11846">
    <property type="entry name" value="ADENYLOSUCCINATE SYNTHETASE"/>
    <property type="match status" value="1"/>
</dbReference>
<dbReference type="PANTHER" id="PTHR11846:SF0">
    <property type="entry name" value="ADENYLOSUCCINATE SYNTHETASE"/>
    <property type="match status" value="1"/>
</dbReference>
<dbReference type="Pfam" id="PF00709">
    <property type="entry name" value="Adenylsucc_synt"/>
    <property type="match status" value="1"/>
</dbReference>
<dbReference type="SMART" id="SM00788">
    <property type="entry name" value="Adenylsucc_synt"/>
    <property type="match status" value="1"/>
</dbReference>
<dbReference type="SUPFAM" id="SSF52540">
    <property type="entry name" value="P-loop containing nucleoside triphosphate hydrolases"/>
    <property type="match status" value="1"/>
</dbReference>
<dbReference type="PROSITE" id="PS01266">
    <property type="entry name" value="ADENYLOSUCCIN_SYN_1"/>
    <property type="match status" value="1"/>
</dbReference>
<dbReference type="PROSITE" id="PS00513">
    <property type="entry name" value="ADENYLOSUCCIN_SYN_2"/>
    <property type="match status" value="1"/>
</dbReference>
<reference key="1">
    <citation type="journal article" date="2005" name="Jpn. Agric. Res. Q.">
        <title>Genome sequence of Xanthomonas oryzae pv. oryzae suggests contribution of large numbers of effector genes and insertion sequences to its race diversity.</title>
        <authorList>
            <person name="Ochiai H."/>
            <person name="Inoue Y."/>
            <person name="Takeya M."/>
            <person name="Sasaki A."/>
            <person name="Kaku H."/>
        </authorList>
    </citation>
    <scope>NUCLEOTIDE SEQUENCE [LARGE SCALE GENOMIC DNA]</scope>
    <source>
        <strain>MAFF 311018</strain>
    </source>
</reference>
<gene>
    <name evidence="1" type="primary">purA</name>
    <name type="ordered locus">XOO0840</name>
</gene>
<feature type="chain" id="PRO_1000000945" description="Adenylosuccinate synthetase">
    <location>
        <begin position="1"/>
        <end position="430"/>
    </location>
</feature>
<feature type="active site" description="Proton acceptor" evidence="1">
    <location>
        <position position="14"/>
    </location>
</feature>
<feature type="active site" description="Proton donor" evidence="1">
    <location>
        <position position="42"/>
    </location>
</feature>
<feature type="binding site" evidence="1">
    <location>
        <begin position="13"/>
        <end position="19"/>
    </location>
    <ligand>
        <name>GTP</name>
        <dbReference type="ChEBI" id="CHEBI:37565"/>
    </ligand>
</feature>
<feature type="binding site" description="in other chain" evidence="1">
    <location>
        <begin position="14"/>
        <end position="17"/>
    </location>
    <ligand>
        <name>IMP</name>
        <dbReference type="ChEBI" id="CHEBI:58053"/>
        <note>ligand shared between dimeric partners</note>
    </ligand>
</feature>
<feature type="binding site" evidence="1">
    <location>
        <position position="14"/>
    </location>
    <ligand>
        <name>Mg(2+)</name>
        <dbReference type="ChEBI" id="CHEBI:18420"/>
    </ligand>
</feature>
<feature type="binding site" description="in other chain" evidence="1">
    <location>
        <begin position="39"/>
        <end position="42"/>
    </location>
    <ligand>
        <name>IMP</name>
        <dbReference type="ChEBI" id="CHEBI:58053"/>
        <note>ligand shared between dimeric partners</note>
    </ligand>
</feature>
<feature type="binding site" evidence="1">
    <location>
        <begin position="41"/>
        <end position="43"/>
    </location>
    <ligand>
        <name>GTP</name>
        <dbReference type="ChEBI" id="CHEBI:37565"/>
    </ligand>
</feature>
<feature type="binding site" evidence="1">
    <location>
        <position position="41"/>
    </location>
    <ligand>
        <name>Mg(2+)</name>
        <dbReference type="ChEBI" id="CHEBI:18420"/>
    </ligand>
</feature>
<feature type="binding site" description="in other chain" evidence="1">
    <location>
        <position position="130"/>
    </location>
    <ligand>
        <name>IMP</name>
        <dbReference type="ChEBI" id="CHEBI:58053"/>
        <note>ligand shared between dimeric partners</note>
    </ligand>
</feature>
<feature type="binding site" evidence="1">
    <location>
        <position position="144"/>
    </location>
    <ligand>
        <name>IMP</name>
        <dbReference type="ChEBI" id="CHEBI:58053"/>
        <note>ligand shared between dimeric partners</note>
    </ligand>
</feature>
<feature type="binding site" description="in other chain" evidence="1">
    <location>
        <position position="225"/>
    </location>
    <ligand>
        <name>IMP</name>
        <dbReference type="ChEBI" id="CHEBI:58053"/>
        <note>ligand shared between dimeric partners</note>
    </ligand>
</feature>
<feature type="binding site" description="in other chain" evidence="1">
    <location>
        <position position="240"/>
    </location>
    <ligand>
        <name>IMP</name>
        <dbReference type="ChEBI" id="CHEBI:58053"/>
        <note>ligand shared between dimeric partners</note>
    </ligand>
</feature>
<feature type="binding site" evidence="1">
    <location>
        <begin position="300"/>
        <end position="306"/>
    </location>
    <ligand>
        <name>substrate</name>
    </ligand>
</feature>
<feature type="binding site" description="in other chain" evidence="1">
    <location>
        <position position="304"/>
    </location>
    <ligand>
        <name>IMP</name>
        <dbReference type="ChEBI" id="CHEBI:58053"/>
        <note>ligand shared between dimeric partners</note>
    </ligand>
</feature>
<feature type="binding site" evidence="1">
    <location>
        <position position="306"/>
    </location>
    <ligand>
        <name>GTP</name>
        <dbReference type="ChEBI" id="CHEBI:37565"/>
    </ligand>
</feature>
<feature type="binding site" evidence="1">
    <location>
        <begin position="332"/>
        <end position="334"/>
    </location>
    <ligand>
        <name>GTP</name>
        <dbReference type="ChEBI" id="CHEBI:37565"/>
    </ligand>
</feature>
<feature type="binding site" evidence="1">
    <location>
        <begin position="414"/>
        <end position="416"/>
    </location>
    <ligand>
        <name>GTP</name>
        <dbReference type="ChEBI" id="CHEBI:37565"/>
    </ligand>
</feature>
<name>PURA_XANOM</name>
<accession>Q2P782</accession>
<proteinExistence type="inferred from homology"/>